<feature type="chain" id="PRO_0000258422" description="Phosphoribosylformylglycinamidine cyclo-ligase">
    <location>
        <begin position="1"/>
        <end position="345"/>
    </location>
</feature>
<accession>Q3AMJ2</accession>
<organism>
    <name type="scientific">Synechococcus sp. (strain CC9605)</name>
    <dbReference type="NCBI Taxonomy" id="110662"/>
    <lineage>
        <taxon>Bacteria</taxon>
        <taxon>Bacillati</taxon>
        <taxon>Cyanobacteriota</taxon>
        <taxon>Cyanophyceae</taxon>
        <taxon>Synechococcales</taxon>
        <taxon>Synechococcaceae</taxon>
        <taxon>Synechococcus</taxon>
    </lineage>
</organism>
<keyword id="KW-0067">ATP-binding</keyword>
<keyword id="KW-0963">Cytoplasm</keyword>
<keyword id="KW-0436">Ligase</keyword>
<keyword id="KW-0547">Nucleotide-binding</keyword>
<keyword id="KW-0658">Purine biosynthesis</keyword>
<protein>
    <recommendedName>
        <fullName evidence="1">Phosphoribosylformylglycinamidine cyclo-ligase</fullName>
        <ecNumber evidence="1">6.3.3.1</ecNumber>
    </recommendedName>
    <alternativeName>
        <fullName evidence="1">AIR synthase</fullName>
    </alternativeName>
    <alternativeName>
        <fullName evidence="1">AIRS</fullName>
    </alternativeName>
    <alternativeName>
        <fullName evidence="1">Phosphoribosyl-aminoimidazole synthetase</fullName>
    </alternativeName>
</protein>
<name>PUR5_SYNSC</name>
<comment type="catalytic activity">
    <reaction evidence="1">
        <text>2-formamido-N(1)-(5-O-phospho-beta-D-ribosyl)acetamidine + ATP = 5-amino-1-(5-phospho-beta-D-ribosyl)imidazole + ADP + phosphate + H(+)</text>
        <dbReference type="Rhea" id="RHEA:23032"/>
        <dbReference type="ChEBI" id="CHEBI:15378"/>
        <dbReference type="ChEBI" id="CHEBI:30616"/>
        <dbReference type="ChEBI" id="CHEBI:43474"/>
        <dbReference type="ChEBI" id="CHEBI:137981"/>
        <dbReference type="ChEBI" id="CHEBI:147287"/>
        <dbReference type="ChEBI" id="CHEBI:456216"/>
        <dbReference type="EC" id="6.3.3.1"/>
    </reaction>
</comment>
<comment type="pathway">
    <text evidence="1">Purine metabolism; IMP biosynthesis via de novo pathway; 5-amino-1-(5-phospho-D-ribosyl)imidazole from N(2)-formyl-N(1)-(5-phospho-D-ribosyl)glycinamide: step 2/2.</text>
</comment>
<comment type="subcellular location">
    <subcellularLocation>
        <location evidence="1">Cytoplasm</location>
    </subcellularLocation>
</comment>
<comment type="similarity">
    <text evidence="1">Belongs to the AIR synthase family.</text>
</comment>
<comment type="sequence caution" evidence="2">
    <conflict type="erroneous initiation">
        <sequence resource="EMBL-CDS" id="ABB34190"/>
    </conflict>
</comment>
<proteinExistence type="inferred from homology"/>
<dbReference type="EC" id="6.3.3.1" evidence="1"/>
<dbReference type="EMBL" id="CP000110">
    <property type="protein sequence ID" value="ABB34190.1"/>
    <property type="status" value="ALT_INIT"/>
    <property type="molecule type" value="Genomic_DNA"/>
</dbReference>
<dbReference type="RefSeq" id="WP_041434355.1">
    <property type="nucleotide sequence ID" value="NC_007516.1"/>
</dbReference>
<dbReference type="SMR" id="Q3AMJ2"/>
<dbReference type="STRING" id="110662.Syncc9605_0414"/>
<dbReference type="KEGG" id="syd:Syncc9605_0414"/>
<dbReference type="eggNOG" id="COG0150">
    <property type="taxonomic scope" value="Bacteria"/>
</dbReference>
<dbReference type="HOGENOM" id="CLU_047116_0_0_3"/>
<dbReference type="OrthoDB" id="9802507at2"/>
<dbReference type="UniPathway" id="UPA00074">
    <property type="reaction ID" value="UER00129"/>
</dbReference>
<dbReference type="GO" id="GO:0005829">
    <property type="term" value="C:cytosol"/>
    <property type="evidence" value="ECO:0007669"/>
    <property type="project" value="TreeGrafter"/>
</dbReference>
<dbReference type="GO" id="GO:0005524">
    <property type="term" value="F:ATP binding"/>
    <property type="evidence" value="ECO:0007669"/>
    <property type="project" value="UniProtKB-KW"/>
</dbReference>
<dbReference type="GO" id="GO:0004637">
    <property type="term" value="F:phosphoribosylamine-glycine ligase activity"/>
    <property type="evidence" value="ECO:0007669"/>
    <property type="project" value="TreeGrafter"/>
</dbReference>
<dbReference type="GO" id="GO:0004641">
    <property type="term" value="F:phosphoribosylformylglycinamidine cyclo-ligase activity"/>
    <property type="evidence" value="ECO:0007669"/>
    <property type="project" value="UniProtKB-UniRule"/>
</dbReference>
<dbReference type="GO" id="GO:0006189">
    <property type="term" value="P:'de novo' IMP biosynthetic process"/>
    <property type="evidence" value="ECO:0007669"/>
    <property type="project" value="UniProtKB-UniRule"/>
</dbReference>
<dbReference type="GO" id="GO:0046084">
    <property type="term" value="P:adenine biosynthetic process"/>
    <property type="evidence" value="ECO:0007669"/>
    <property type="project" value="TreeGrafter"/>
</dbReference>
<dbReference type="CDD" id="cd02196">
    <property type="entry name" value="PurM"/>
    <property type="match status" value="1"/>
</dbReference>
<dbReference type="FunFam" id="3.30.1330.10:FF:000001">
    <property type="entry name" value="Phosphoribosylformylglycinamidine cyclo-ligase"/>
    <property type="match status" value="1"/>
</dbReference>
<dbReference type="FunFam" id="3.90.650.10:FF:000011">
    <property type="entry name" value="Phosphoribosylformylglycinamidine cyclo-ligase"/>
    <property type="match status" value="1"/>
</dbReference>
<dbReference type="Gene3D" id="3.90.650.10">
    <property type="entry name" value="PurM-like C-terminal domain"/>
    <property type="match status" value="1"/>
</dbReference>
<dbReference type="Gene3D" id="3.30.1330.10">
    <property type="entry name" value="PurM-like, N-terminal domain"/>
    <property type="match status" value="1"/>
</dbReference>
<dbReference type="HAMAP" id="MF_00741">
    <property type="entry name" value="AIRS"/>
    <property type="match status" value="1"/>
</dbReference>
<dbReference type="InterPro" id="IPR010918">
    <property type="entry name" value="PurM-like_C_dom"/>
</dbReference>
<dbReference type="InterPro" id="IPR036676">
    <property type="entry name" value="PurM-like_C_sf"/>
</dbReference>
<dbReference type="InterPro" id="IPR016188">
    <property type="entry name" value="PurM-like_N"/>
</dbReference>
<dbReference type="InterPro" id="IPR036921">
    <property type="entry name" value="PurM-like_N_sf"/>
</dbReference>
<dbReference type="InterPro" id="IPR004733">
    <property type="entry name" value="PurM_cligase"/>
</dbReference>
<dbReference type="NCBIfam" id="TIGR00878">
    <property type="entry name" value="purM"/>
    <property type="match status" value="1"/>
</dbReference>
<dbReference type="PANTHER" id="PTHR10520:SF12">
    <property type="entry name" value="TRIFUNCTIONAL PURINE BIOSYNTHETIC PROTEIN ADENOSINE-3"/>
    <property type="match status" value="1"/>
</dbReference>
<dbReference type="PANTHER" id="PTHR10520">
    <property type="entry name" value="TRIFUNCTIONAL PURINE BIOSYNTHETIC PROTEIN ADENOSINE-3-RELATED"/>
    <property type="match status" value="1"/>
</dbReference>
<dbReference type="Pfam" id="PF00586">
    <property type="entry name" value="AIRS"/>
    <property type="match status" value="1"/>
</dbReference>
<dbReference type="Pfam" id="PF02769">
    <property type="entry name" value="AIRS_C"/>
    <property type="match status" value="1"/>
</dbReference>
<dbReference type="SUPFAM" id="SSF56042">
    <property type="entry name" value="PurM C-terminal domain-like"/>
    <property type="match status" value="1"/>
</dbReference>
<dbReference type="SUPFAM" id="SSF55326">
    <property type="entry name" value="PurM N-terminal domain-like"/>
    <property type="match status" value="1"/>
</dbReference>
<evidence type="ECO:0000255" key="1">
    <source>
        <dbReference type="HAMAP-Rule" id="MF_00741"/>
    </source>
</evidence>
<evidence type="ECO:0000305" key="2"/>
<gene>
    <name evidence="1" type="primary">purM</name>
    <name type="ordered locus">Syncc9605_0414</name>
</gene>
<reference key="1">
    <citation type="submission" date="2005-07" db="EMBL/GenBank/DDBJ databases">
        <title>Complete sequence of Synechococcus sp. CC9605.</title>
        <authorList>
            <consortium name="US DOE Joint Genome Institute"/>
            <person name="Copeland A."/>
            <person name="Lucas S."/>
            <person name="Lapidus A."/>
            <person name="Barry K."/>
            <person name="Detter J.C."/>
            <person name="Glavina T."/>
            <person name="Hammon N."/>
            <person name="Israni S."/>
            <person name="Pitluck S."/>
            <person name="Schmutz J."/>
            <person name="Martinez M."/>
            <person name="Larimer F."/>
            <person name="Land M."/>
            <person name="Kyrpides N."/>
            <person name="Ivanova N."/>
            <person name="Richardson P."/>
        </authorList>
    </citation>
    <scope>NUCLEOTIDE SEQUENCE [LARGE SCALE GENOMIC DNA]</scope>
    <source>
        <strain>CC9605</strain>
    </source>
</reference>
<sequence>MDYKSAGVDVEAGRAFVQRIKASVEATHRPEVIGGLGGFGGLMSLPAGMRKPLLVSGTDGVGTKLELAQEHGSHHGVGIDLVAMCVNDVITSGAAPLFFLDYMATGALAPSAMAEVVEGIADGCRQSGCALLGGETAEMPGFYPQGRYDIAGFCVAVVEEDELIDGQRIQPGDSVIGVASSGVHSNGFSLVRKVLEKANADANTVYGDNQRPLIGDLLAPTTLYADLVQHLMQSGCELHGMAHITGGGLPENLPRCLPEGCSARIDASSWTRPTLFRWLQEAGNIPERDLWHTFNLGIGFCLVVPARSEDAVIEHCRGKNHQAWLIGNVTSNTPGNAAVLEGVPA</sequence>